<proteinExistence type="evidence at protein level"/>
<protein>
    <recommendedName>
        <fullName>Phosphoprotein</fullName>
        <shortName>Protein P</shortName>
    </recommendedName>
</protein>
<sequence>MDKLELVNDGLNIIDFIQKNQKEIQKTYGRSSIQQPSIKDQTKAWEDFLQCTSGESEQVEGGMSKDDGDVERRNLEDLSSTSPTDGTIGKRVSNTRDWAEGSDDIQLDPVVTDVVYHDHGGECTGYGFTSSPERGWSDYTSGANNGNVCLVSDAKMLSYAPEIAVSKEDRETDLVHLENKLSTTGLNPTAVPFTLRNLSDPAKDSPVIAEHYYGLGVKEQNVGPQTSRNVNLDSIKLYTSDDEEADQLEFEDEFAGSSSEVIVGISPEDEEPSSVGGKPNESIGRTIEGQSIRDNLQAKDNKSTDVPGAGPKDSAVKEEPPQKRLPMLAEEFECSGSEDPIIRELLKENSLINCQQGKDAQPPYHWSIERSISPDKTEIVNGAVQTADRQRPGTPMPKSRGIPIKKGTDAKYPSAGTENVPGSKSGATRHVRGSPPYQEGKSVNAENVQLNASTAVKETDKSEVNPVDDNDSLDDKYIMPSDDFSNTFFPHDTDRLNYHADHLGDYDLETLCEESVLMGVINSIKLINLDMRLNHIEEQVKEIPKIINKLESIDRVLAKTNTALSTIEGHLVSMMIMIPGKGKGERKGKNNPELKPVIGRDILEQQSLFSFDNVKNFRDGSLTNEPYGAAVQLREDLILPELNFEETNASQFVPMADDSSRDVIKTLIRTHIKDRELRSELIGYLNKAENDEEIQEIANTVNDIIDGNI</sequence>
<organism>
    <name type="scientific">Nipah virus</name>
    <dbReference type="NCBI Taxonomy" id="3052225"/>
    <lineage>
        <taxon>Viruses</taxon>
        <taxon>Riboviria</taxon>
        <taxon>Orthornavirae</taxon>
        <taxon>Negarnaviricota</taxon>
        <taxon>Haploviricotina</taxon>
        <taxon>Monjiviricetes</taxon>
        <taxon>Mononegavirales</taxon>
        <taxon>Paramyxoviridae</taxon>
        <taxon>Orthoparamyxovirinae</taxon>
        <taxon>Henipavirus</taxon>
    </lineage>
</organism>
<gene>
    <name type="primary">P/V/C</name>
</gene>
<organismHost>
    <name type="scientific">Cynopterus brachyotis</name>
    <name type="common">Lesser short-nosed fruit bat</name>
    <name type="synonym">Pachysoma brachyotis</name>
    <dbReference type="NCBI Taxonomy" id="58060"/>
</organismHost>
<organismHost>
    <name type="scientific">Eonycteris spelaea</name>
    <name type="common">Lesser dawn bat</name>
    <name type="synonym">Macroglossus spelaeus</name>
    <dbReference type="NCBI Taxonomy" id="58065"/>
</organismHost>
<organismHost>
    <name type="scientific">Homo sapiens</name>
    <name type="common">Human</name>
    <dbReference type="NCBI Taxonomy" id="9606"/>
</organismHost>
<organismHost>
    <name type="scientific">Pteropus hypomelanus</name>
    <name type="common">Island flying fox</name>
    <name type="synonym">Variable flying fox</name>
    <dbReference type="NCBI Taxonomy" id="9405"/>
</organismHost>
<organismHost>
    <name type="scientific">Pteropus vampyrus</name>
    <name type="common">Large flying fox</name>
    <dbReference type="NCBI Taxonomy" id="132908"/>
</organismHost>
<organismHost>
    <name type="scientific">Scotophilus kuhlii</name>
    <name type="common">Lesser asiatic yellow bat</name>
    <dbReference type="NCBI Taxonomy" id="153297"/>
</organismHost>
<organismHost>
    <name type="scientific">Sus scrofa</name>
    <name type="common">Pig</name>
    <dbReference type="NCBI Taxonomy" id="9823"/>
</organismHost>
<accession>Q9IK91</accession>
<accession>Q5K4E1</accession>
<accession>Q8QU02</accession>
<keyword id="KW-0002">3D-structure</keyword>
<keyword id="KW-1035">Host cytoplasm</keyword>
<keyword id="KW-0945">Host-virus interaction</keyword>
<keyword id="KW-1090">Inhibition of host innate immune response by virus</keyword>
<keyword id="KW-0922">Interferon antiviral system evasion</keyword>
<keyword id="KW-0597">Phosphoprotein</keyword>
<keyword id="KW-0691">RNA editing</keyword>
<keyword id="KW-0899">Viral immunoevasion</keyword>
<keyword id="KW-0693">Viral RNA replication</keyword>
<keyword id="KW-0946">Virion</keyword>
<name>PHOSP_NIPAV</name>
<feature type="chain" id="PRO_0000236013" description="Phosphoprotein">
    <location>
        <begin position="1"/>
        <end position="709"/>
    </location>
</feature>
<feature type="region of interest" description="N0 binding" evidence="7">
    <location>
        <begin position="1"/>
        <end position="35"/>
    </location>
</feature>
<feature type="region of interest" description="Disordered" evidence="5">
    <location>
        <begin position="53"/>
        <end position="92"/>
    </location>
</feature>
<feature type="region of interest" description="Interaction with host STAT1" evidence="9">
    <location>
        <begin position="110"/>
        <end position="140"/>
    </location>
</feature>
<feature type="region of interest" description="Disordered" evidence="5">
    <location>
        <begin position="265"/>
        <end position="324"/>
    </location>
</feature>
<feature type="region of interest" description="Disordered" evidence="5">
    <location>
        <begin position="384"/>
        <end position="473"/>
    </location>
</feature>
<feature type="region of interest" description="Multimerization" evidence="9">
    <location>
        <begin position="475"/>
        <end position="580"/>
    </location>
</feature>
<feature type="compositionally biased region" description="Basic and acidic residues" evidence="5">
    <location>
        <begin position="63"/>
        <end position="76"/>
    </location>
</feature>
<feature type="compositionally biased region" description="Polar residues" evidence="5">
    <location>
        <begin position="416"/>
        <end position="426"/>
    </location>
</feature>
<feature type="compositionally biased region" description="Polar residues" evidence="5">
    <location>
        <begin position="444"/>
        <end position="456"/>
    </location>
</feature>
<feature type="modified residue" description="Phosphoserine; by host" evidence="1">
    <location>
        <position position="257"/>
    </location>
</feature>
<feature type="modified residue" description="Phosphoserine; by host" evidence="1">
    <location>
        <position position="350"/>
    </location>
</feature>
<feature type="sequence variant" description="In strain: Isolate Malaysian flying-fox.">
    <original>P</original>
    <variation>L</variation>
    <location>
        <position position="206"/>
    </location>
</feature>
<feature type="sequence variant" description="In strain: Isolate NV/MY/99/VRI-0626.">
    <original>S</original>
    <variation>R</variation>
    <location>
        <position position="274"/>
    </location>
</feature>
<feature type="sequence variant" description="In strain: Isolate NV/MY/99/VRI-0626.">
    <original>T</original>
    <variation>A</variation>
    <location>
        <position position="304"/>
    </location>
</feature>
<feature type="sequence variant" description="In strain: Isolate NV/MY/99/VRI-0626.">
    <original>E</original>
    <variation>K</variation>
    <location>
        <position position="378"/>
    </location>
</feature>
<feature type="mutagenesis site" description="45% loss of polymerization activity by the viral polymerase." evidence="8">
    <original>K</original>
    <variation>A</variation>
    <location>
        <position position="545"/>
    </location>
</feature>
<feature type="mutagenesis site" description="70% loss of polymerization activity by the viral polymerase." evidence="8">
    <original>K</original>
    <variation>A</variation>
    <location>
        <position position="549"/>
    </location>
</feature>
<feature type="mutagenesis site" description="Slight increase in polymerization activity by the viral polymerase." evidence="8">
    <original>D</original>
    <variation>A</variation>
    <location>
        <position position="554"/>
    </location>
</feature>
<feature type="mutagenesis site" description="Complete loss of polymerization activity by the viral polymerase." evidence="8">
    <original>R</original>
    <variation>A</variation>
    <location>
        <position position="555"/>
    </location>
</feature>
<feature type="mutagenesis site" description="50% loss of polymerization activity by the viral polymerase." evidence="8">
    <original>K</original>
    <variation>A</variation>
    <location>
        <position position="559"/>
    </location>
</feature>
<feature type="helix" evidence="17">
    <location>
        <begin position="1"/>
        <end position="28"/>
    </location>
</feature>
<feature type="helix" evidence="18">
    <location>
        <begin position="480"/>
        <end position="483"/>
    </location>
</feature>
<feature type="turn" evidence="18">
    <location>
        <begin position="484"/>
        <end position="487"/>
    </location>
</feature>
<feature type="helix" evidence="18">
    <location>
        <begin position="490"/>
        <end position="503"/>
    </location>
</feature>
<feature type="helix" evidence="18">
    <location>
        <begin position="508"/>
        <end position="541"/>
    </location>
</feature>
<feature type="helix" evidence="18">
    <location>
        <begin position="545"/>
        <end position="577"/>
    </location>
</feature>
<feature type="strand" evidence="20">
    <location>
        <begin position="594"/>
        <end position="599"/>
    </location>
</feature>
<feature type="helix" evidence="20">
    <location>
        <begin position="603"/>
        <end position="607"/>
    </location>
</feature>
<feature type="helix" evidence="20">
    <location>
        <begin position="635"/>
        <end position="637"/>
    </location>
</feature>
<feature type="strand" evidence="21">
    <location>
        <begin position="644"/>
        <end position="647"/>
    </location>
</feature>
<feature type="strand" evidence="21">
    <location>
        <begin position="649"/>
        <end position="651"/>
    </location>
</feature>
<feature type="helix" evidence="19">
    <location>
        <begin position="660"/>
        <end position="671"/>
    </location>
</feature>
<feature type="helix" evidence="19">
    <location>
        <begin position="675"/>
        <end position="709"/>
    </location>
</feature>
<comment type="function">
    <text evidence="4 7">Essential cofactor of the RNA polymerase L that plays a central role in the transcription and replication by forming the polymerase complex with RNA polymerase L and recruiting L to the genomic N-RNA template for RNA synthesis (By similarity). Also plays a central role in the encapsidation of nascent RNA chains by forming the encapsidation complex with the nucleocapsid protein N (N-P complex). Acts as a chaperone for newly synthesized free N protein, so-called N0, allowing encapsidation of nascent RNA chains during replication (PubMed:25108352). The nucleoprotein protein N prevents excessive phosphorylation of P, which leads to down-regulation of viral transcription/ replication. Participates, together with N, in the formation of viral factories (viroplasms), which are large inclusions in the host cytoplasm where replication takes place (By similarity).</text>
</comment>
<comment type="subunit">
    <text evidence="3 6 7 9 10">Homotetramer (PubMed:32348724). Interacts (via multimerization domain) with polymerase L; this interaction forms the polymerase L-P complex (By similarity). Interacts (via N-terminus) with N0 (via Ncore); this interaction allows P to chaperon N0 to avoid N polymerization before encapsidation (PubMed:25108352). Interacts (via C-terminus) with N-RNA template (via C-terminus); this interaction positions the polymerase on the template for both transcription and replication (PubMed:35317998). Interacts with host STAT1 (PubMed:15140960).</text>
</comment>
<comment type="interaction">
    <interactant intactId="EBI-16116432">
        <id>Q9IK91</id>
    </interactant>
    <interactant intactId="EBI-16116412">
        <id>Q9IK92</id>
        <label>N</label>
    </interactant>
    <organismsDiffer>false</organismsDiffer>
    <experiments>5</experiments>
</comment>
<comment type="subcellular location">
    <subcellularLocation>
        <location>Virion</location>
    </subcellularLocation>
    <subcellularLocation>
        <location>Host cytoplasm</location>
    </subcellularLocation>
</comment>
<comment type="domain">
    <text evidence="2 3 4 7 9">The N-terminus consists of a long intrinsically disordered tail (By similarity). The central part contains the coiled-coil multimerization domain (PMD) (PubMed:25108352, PubMed:32348724). Forms a four-stranded coiled coil structure (By similarity). The C-terminus constitutes the alpha-helical domain that binds to the nucleocapsid (N-RNA complex) (By similarity).</text>
</comment>
<comment type="RNA editing">
    <location>
        <position position="406"/>
    </location>
    <text>Partially edited. RNA editing at this position consists of an insertion of one or two guanine nucleotides. The sequence displayed here is the P protein, derived from the unedited RNA. The edited RNA gives rise to the V protein (+1G) (AC Q997F2), and the W protein (+2G) (AC P0C1C7).</text>
</comment>
<comment type="miscellaneous">
    <text>The P/V/C gene has two overlapping open reading frames. One encodes the P/V/W proteins and the other the C protein.</text>
</comment>
<dbReference type="EMBL" id="AF212302">
    <property type="protein sequence ID" value="AAF73378.1"/>
    <property type="molecule type" value="Genomic_RNA"/>
</dbReference>
<dbReference type="EMBL" id="AY029767">
    <property type="protein sequence ID" value="AAK50541.1"/>
    <property type="molecule type" value="Genomic_RNA"/>
</dbReference>
<dbReference type="EMBL" id="AY029768">
    <property type="protein sequence ID" value="AAK50549.1"/>
    <property type="molecule type" value="Genomic_RNA"/>
</dbReference>
<dbReference type="EMBL" id="AJ564621">
    <property type="protein sequence ID" value="CAD92348.1"/>
    <property type="molecule type" value="Genomic_RNA"/>
</dbReference>
<dbReference type="EMBL" id="AJ564622">
    <property type="protein sequence ID" value="CAD92354.1"/>
    <property type="molecule type" value="Genomic_RNA"/>
</dbReference>
<dbReference type="EMBL" id="AJ564623">
    <property type="protein sequence ID" value="CAD92360.1"/>
    <property type="molecule type" value="Genomic_RNA"/>
</dbReference>
<dbReference type="EMBL" id="AF376747">
    <property type="protein sequence ID" value="AAM13402.1"/>
    <property type="molecule type" value="Genomic_RNA"/>
</dbReference>
<dbReference type="EMBL" id="AJ627196">
    <property type="protein sequence ID" value="CAF25494.1"/>
    <property type="molecule type" value="Genomic_RNA"/>
</dbReference>
<dbReference type="RefSeq" id="NP_112022.1">
    <property type="nucleotide sequence ID" value="NC_002728.1"/>
</dbReference>
<dbReference type="PDB" id="4CO6">
    <property type="method" value="X-ray"/>
    <property type="resolution" value="2.50 A"/>
    <property type="chains" value="D/E/F=1-50"/>
</dbReference>
<dbReference type="PDB" id="4GJW">
    <property type="method" value="X-ray"/>
    <property type="resolution" value="3.00 A"/>
    <property type="chains" value="A/B/C/D/E/F/G/H=471-580"/>
</dbReference>
<dbReference type="PDB" id="6EB8">
    <property type="method" value="X-ray"/>
    <property type="resolution" value="2.50 A"/>
    <property type="chains" value="A/B/C/D/E/F/G/H=470-578"/>
</dbReference>
<dbReference type="PDB" id="6EB9">
    <property type="method" value="X-ray"/>
    <property type="resolution" value="1.90 A"/>
    <property type="chains" value="A=470-578"/>
</dbReference>
<dbReference type="PDB" id="7PNO">
    <property type="method" value="X-ray"/>
    <property type="resolution" value="2.79 A"/>
    <property type="chains" value="A/C/E/G/I/K/M=655-709"/>
</dbReference>
<dbReference type="PDB" id="7PON">
    <property type="method" value="X-ray"/>
    <property type="resolution" value="2.10 A"/>
    <property type="chains" value="A=655-709"/>
</dbReference>
<dbReference type="PDB" id="8ZPV">
    <property type="method" value="EM"/>
    <property type="resolution" value="2.90 A"/>
    <property type="chains" value="B/C/D/E=1-709"/>
</dbReference>
<dbReference type="PDB" id="9CGI">
    <property type="method" value="EM"/>
    <property type="resolution" value="2.92 A"/>
    <property type="chains" value="B/C/D/E=1-709"/>
</dbReference>
<dbReference type="PDB" id="9FUX">
    <property type="method" value="EM"/>
    <property type="resolution" value="2.49 A"/>
    <property type="chains" value="C/D/E/F=2-709"/>
</dbReference>
<dbReference type="PDB" id="9GJT">
    <property type="method" value="EM"/>
    <property type="resolution" value="2.60 A"/>
    <property type="chains" value="B/C/D/E=1-709"/>
</dbReference>
<dbReference type="PDB" id="9GJU">
    <property type="method" value="EM"/>
    <property type="resolution" value="2.80 A"/>
    <property type="chains" value="B/C/D/E=1-709"/>
</dbReference>
<dbReference type="PDB" id="9IR3">
    <property type="method" value="EM"/>
    <property type="resolution" value="3.19 A"/>
    <property type="chains" value="C/D/E/F/G=1-709"/>
</dbReference>
<dbReference type="PDB" id="9IR4">
    <property type="method" value="EM"/>
    <property type="resolution" value="3.01 A"/>
    <property type="chains" value="C/D/E/F/G=1-709"/>
</dbReference>
<dbReference type="PDBsum" id="4CO6"/>
<dbReference type="PDBsum" id="4GJW"/>
<dbReference type="PDBsum" id="6EB8"/>
<dbReference type="PDBsum" id="6EB9"/>
<dbReference type="PDBsum" id="7PNO"/>
<dbReference type="PDBsum" id="7PON"/>
<dbReference type="PDBsum" id="8ZPV"/>
<dbReference type="PDBsum" id="9CGI"/>
<dbReference type="PDBsum" id="9FUX"/>
<dbReference type="PDBsum" id="9GJT"/>
<dbReference type="PDBsum" id="9GJU"/>
<dbReference type="PDBsum" id="9IR3"/>
<dbReference type="PDBsum" id="9IR4"/>
<dbReference type="EMDB" id="EMD-45580"/>
<dbReference type="EMDB" id="EMD-50781"/>
<dbReference type="EMDB" id="EMD-51402"/>
<dbReference type="EMDB" id="EMD-51403"/>
<dbReference type="EMDB" id="EMD-60355"/>
<dbReference type="EMDB" id="EMD-60799"/>
<dbReference type="EMDB" id="EMD-60800"/>
<dbReference type="SASBDB" id="Q9IK91"/>
<dbReference type="SMR" id="Q9IK91"/>
<dbReference type="DIP" id="DIP-61042N"/>
<dbReference type="IntAct" id="Q9IK91">
    <property type="interactions" value="11"/>
</dbReference>
<dbReference type="MINT" id="Q9IK91"/>
<dbReference type="KEGG" id="vg:920952"/>
<dbReference type="OrthoDB" id="20684at10239"/>
<dbReference type="EvolutionaryTrace" id="Q9IK91"/>
<dbReference type="Proteomes" id="UP000002330">
    <property type="component" value="Segment"/>
</dbReference>
<dbReference type="Proteomes" id="UP000007527">
    <property type="component" value="Segment"/>
</dbReference>
<dbReference type="Proteomes" id="UP000008676">
    <property type="component" value="Segment"/>
</dbReference>
<dbReference type="Proteomes" id="UP000100567">
    <property type="component" value="Segment"/>
</dbReference>
<dbReference type="Proteomes" id="UP000110983">
    <property type="component" value="Segment"/>
</dbReference>
<dbReference type="Proteomes" id="UP000130871">
    <property type="component" value="Segment"/>
</dbReference>
<dbReference type="Proteomes" id="UP000170143">
    <property type="component" value="Segment"/>
</dbReference>
<dbReference type="GO" id="GO:0030430">
    <property type="term" value="C:host cell cytoplasm"/>
    <property type="evidence" value="ECO:0007669"/>
    <property type="project" value="UniProtKB-SubCell"/>
</dbReference>
<dbReference type="GO" id="GO:0044423">
    <property type="term" value="C:virion component"/>
    <property type="evidence" value="ECO:0007669"/>
    <property type="project" value="UniProtKB-KW"/>
</dbReference>
<dbReference type="GO" id="GO:0060090">
    <property type="term" value="F:molecular adaptor activity"/>
    <property type="evidence" value="ECO:0000269"/>
    <property type="project" value="DisProt"/>
</dbReference>
<dbReference type="GO" id="GO:0039689">
    <property type="term" value="P:negative stranded viral RNA replication"/>
    <property type="evidence" value="ECO:0000314"/>
    <property type="project" value="UniProtKB"/>
</dbReference>
<dbReference type="GO" id="GO:0039697">
    <property type="term" value="P:negative stranded viral RNA transcription"/>
    <property type="evidence" value="ECO:0000314"/>
    <property type="project" value="UniProtKB"/>
</dbReference>
<dbReference type="GO" id="GO:0052170">
    <property type="term" value="P:symbiont-mediated suppression of host innate immune response"/>
    <property type="evidence" value="ECO:0007669"/>
    <property type="project" value="UniProtKB-KW"/>
</dbReference>
<dbReference type="CDD" id="cd21031">
    <property type="entry name" value="MEV_P-protein-C_like"/>
    <property type="match status" value="1"/>
</dbReference>
<dbReference type="DisProt" id="DP00699"/>
<dbReference type="Gene3D" id="1.20.5.110">
    <property type="match status" value="1"/>
</dbReference>
<dbReference type="Gene3D" id="6.10.250.2490">
    <property type="match status" value="1"/>
</dbReference>
<dbReference type="Gene3D" id="1.10.8.10">
    <property type="entry name" value="DNA helicase RuvA subunit, C-terminal domain"/>
    <property type="match status" value="1"/>
</dbReference>
<dbReference type="InterPro" id="IPR004897">
    <property type="entry name" value="P/V_Pprotein_paramyxoviral"/>
</dbReference>
<dbReference type="InterPro" id="IPR028243">
    <property type="entry name" value="Paramyxo_P/V_N"/>
</dbReference>
<dbReference type="InterPro" id="IPR035430">
    <property type="entry name" value="Paramyxo_PNT"/>
</dbReference>
<dbReference type="InterPro" id="IPR025909">
    <property type="entry name" value="Soyouz_module"/>
</dbReference>
<dbReference type="Pfam" id="PF03210">
    <property type="entry name" value="Paramyx_P_V_C"/>
    <property type="match status" value="1"/>
</dbReference>
<dbReference type="Pfam" id="PF13825">
    <property type="entry name" value="Paramyxo_P_V_N"/>
    <property type="match status" value="1"/>
</dbReference>
<dbReference type="Pfam" id="PF14320">
    <property type="entry name" value="Paramyxo_PNT"/>
    <property type="match status" value="1"/>
</dbReference>
<dbReference type="Pfam" id="PF14313">
    <property type="entry name" value="Soyouz_module"/>
    <property type="match status" value="1"/>
</dbReference>
<evidence type="ECO:0000250" key="1"/>
<evidence type="ECO:0000250" key="2">
    <source>
        <dbReference type="UniProtKB" id="P04859"/>
    </source>
</evidence>
<evidence type="ECO:0000250" key="3">
    <source>
        <dbReference type="UniProtKB" id="P06162"/>
    </source>
</evidence>
<evidence type="ECO:0000250" key="4">
    <source>
        <dbReference type="UniProtKB" id="Q77M42"/>
    </source>
</evidence>
<evidence type="ECO:0000256" key="5">
    <source>
        <dbReference type="SAM" id="MobiDB-lite"/>
    </source>
</evidence>
<evidence type="ECO:0000269" key="6">
    <source>
    </source>
</evidence>
<evidence type="ECO:0000269" key="7">
    <source>
    </source>
</evidence>
<evidence type="ECO:0000269" key="8">
    <source>
    </source>
</evidence>
<evidence type="ECO:0000269" key="9">
    <source>
    </source>
</evidence>
<evidence type="ECO:0000269" key="10">
    <source>
    </source>
</evidence>
<evidence type="ECO:0007744" key="11">
    <source>
        <dbReference type="PDB" id="4CO6"/>
    </source>
</evidence>
<evidence type="ECO:0007744" key="12">
    <source>
        <dbReference type="PDB" id="4GJW"/>
    </source>
</evidence>
<evidence type="ECO:0007744" key="13">
    <source>
        <dbReference type="PDB" id="6EB8"/>
    </source>
</evidence>
<evidence type="ECO:0007744" key="14">
    <source>
        <dbReference type="PDB" id="6EB9"/>
    </source>
</evidence>
<evidence type="ECO:0007744" key="15">
    <source>
        <dbReference type="PDB" id="7PNO"/>
    </source>
</evidence>
<evidence type="ECO:0007744" key="16">
    <source>
        <dbReference type="PDB" id="7PON"/>
    </source>
</evidence>
<evidence type="ECO:0007829" key="17">
    <source>
        <dbReference type="PDB" id="4CO6"/>
    </source>
</evidence>
<evidence type="ECO:0007829" key="18">
    <source>
        <dbReference type="PDB" id="6EB9"/>
    </source>
</evidence>
<evidence type="ECO:0007829" key="19">
    <source>
        <dbReference type="PDB" id="7PON"/>
    </source>
</evidence>
<evidence type="ECO:0007829" key="20">
    <source>
        <dbReference type="PDB" id="9CGI"/>
    </source>
</evidence>
<evidence type="ECO:0007829" key="21">
    <source>
        <dbReference type="PDB" id="9IR4"/>
    </source>
</evidence>
<reference key="1">
    <citation type="journal article" date="2000" name="Science">
        <title>Nipah virus: a recently emergent deadly paramyxovirus.</title>
        <authorList>
            <person name="Chua K.B."/>
            <person name="Bellini W.J."/>
            <person name="Rota P.A."/>
            <person name="Harcourt B.H."/>
            <person name="Tamin A."/>
            <person name="Lam S.K."/>
            <person name="Ksiazek T.G."/>
            <person name="Rollin P.E."/>
            <person name="Zaki S.R."/>
            <person name="Shieh W."/>
            <person name="Goldsmith C.S."/>
            <person name="Gubler D.J."/>
            <person name="Roehrig J.T."/>
            <person name="Eaton B."/>
            <person name="Gould A.R."/>
            <person name="Olson J."/>
            <person name="Field H."/>
            <person name="Daniels P."/>
            <person name="Ling A.E."/>
            <person name="Peters C.J."/>
            <person name="Anderson L.J."/>
            <person name="Mahy B.W."/>
        </authorList>
    </citation>
    <scope>NUCLEOTIDE SEQUENCE [GENOMIC RNA]</scope>
</reference>
<reference key="2">
    <citation type="journal article" date="2001" name="Virology">
        <title>Molecular characterization of the polymerase gene and genomic termini of Nipah virus.</title>
        <authorList>
            <person name="Harcourt B.H."/>
            <person name="Tamin A."/>
            <person name="Halpin K."/>
            <person name="Ksiazek T.G."/>
            <person name="Rollin P.E."/>
            <person name="Bellini W.J."/>
            <person name="Rota P.A."/>
        </authorList>
    </citation>
    <scope>NUCLEOTIDE SEQUENCE [GENOMIC RNA]</scope>
</reference>
<reference key="3">
    <citation type="journal article" date="2001" name="J. Gen. Virol.">
        <title>Complete nucleotide sequences of Nipah virus isolates from Malaysia.</title>
        <authorList>
            <person name="Chan Y.P."/>
            <person name="Chua K.B."/>
            <person name="Koh C.L."/>
            <person name="Lim M.E."/>
            <person name="Lam S.K."/>
        </authorList>
    </citation>
    <scope>NUCLEOTIDE SEQUENCE [GENOMIC RNA]</scope>
    <source>
        <strain>Isolate UMMC1</strain>
        <strain>Isolate UMMC2</strain>
    </source>
</reference>
<reference key="4">
    <citation type="journal article" date="2002" name="Microbes Infect.">
        <title>Isolation of Nipah virus from Malaysian island flying-foxes.</title>
        <authorList>
            <person name="Chua K.B."/>
            <person name="Koh C.L."/>
            <person name="Hooi P.S."/>
            <person name="Wee K.F."/>
            <person name="Khong J.H."/>
            <person name="Chua B.H."/>
            <person name="Chan Y.P."/>
            <person name="Lim M.E."/>
            <person name="Lam S.K."/>
        </authorList>
    </citation>
    <scope>NUCLEOTIDE SEQUENCE [GENOMIC RNA]</scope>
    <source>
        <strain>Isolate Malaysian flying-fox</strain>
    </source>
</reference>
<reference key="5">
    <citation type="journal article" date="2004" name="Emerg. Infect. Dis.">
        <title>Isolation and molecular identification of Nipah virus from pigs.</title>
        <authorList>
            <person name="Abubakar S."/>
            <person name="Chang L.Y."/>
            <person name="Mohdali A.R."/>
            <person name="Sharifah S.H."/>
            <person name="Yusoff K."/>
            <person name="Zamrod Z."/>
        </authorList>
    </citation>
    <scope>NUCLEOTIDE SEQUENCE [GENOMIC RNA]</scope>
    <source>
        <strain>Isolate NV/MY/99/UM-0128</strain>
        <strain>Isolate NV/MY/99/VRI-1413</strain>
        <strain>Isolate NV/MY/99/VRI-2794</strain>
    </source>
</reference>
<reference key="6">
    <citation type="submission" date="2005-01" db="EMBL/GenBank/DDBJ databases">
        <title>Identification of a new Nipah virus strain from pigs.</title>
        <authorList>
            <person name="Abubakar S."/>
            <person name="Li-Yen C."/>
            <person name="Mohdali A.R."/>
            <person name="Sharifah S.H."/>
        </authorList>
    </citation>
    <scope>NUCLEOTIDE SEQUENCE [GENOMIC RNA]</scope>
    <source>
        <strain>Isolate NV/MY/99/VRI-0626</strain>
    </source>
</reference>
<reference key="7">
    <citation type="journal article" date="2004" name="J. Virol.">
        <title>Nipah virus V and W proteins have a common STAT1-binding domain yet inhibit STAT1 activation from the cytoplasmic and nuclear compartments, respectively.</title>
        <authorList>
            <person name="Shaw M.L."/>
            <person name="Garcia-Sastre A."/>
            <person name="Palese P."/>
            <person name="Basler C.F."/>
        </authorList>
    </citation>
    <scope>INTERACTION WITH HOST STAT1</scope>
</reference>
<reference evidence="12" key="8">
    <citation type="journal article" date="2020" name="Biophys. J.">
        <title>Structural Description of the Nipah Virus Phosphoprotein and Its Interaction with STAT1.</title>
        <authorList>
            <person name="Jensen M.R."/>
            <person name="Yabukarski F."/>
            <person name="Communie G."/>
            <person name="Condamine E."/>
            <person name="Mas C."/>
            <person name="Volchkova V."/>
            <person name="Tarbouriech N."/>
            <person name="Bourhis J.M."/>
            <person name="Volchkov V."/>
            <person name="Blackledge M."/>
            <person name="Jamin M."/>
        </authorList>
    </citation>
    <scope>X-RAY CRYSTALLOGRAPHY (3.00 ANGSTROMS) OF 471-580</scope>
    <scope>SUBUNIT</scope>
    <scope>DOMAIN</scope>
</reference>
<reference evidence="11" key="9">
    <citation type="journal article" date="2014" name="Nat. Struct. Mol. Biol.">
        <title>Structure of Nipah virus unassembled nucleoprotein in complex with its viral chaperone.</title>
        <authorList>
            <person name="Yabukarski F."/>
            <person name="Lawrence P."/>
            <person name="Tarbouriech N."/>
            <person name="Bourhis J.M."/>
            <person name="Delaforge E."/>
            <person name="Jensen M.R."/>
            <person name="Ruigrok R.W."/>
            <person name="Blackledge M."/>
            <person name="Volchkov V."/>
            <person name="Jamin M."/>
        </authorList>
    </citation>
    <scope>X-RAY CRYSTALLOGRAPHY (2.50 ANGSTROMS) OF 1-50 IN COMPLEX WITH THE NUCLEOPROTEIN</scope>
    <scope>FUNCTION</scope>
    <scope>INTERACTION WITH THE NUCLEOPROTEIN</scope>
</reference>
<reference evidence="13 14" key="10">
    <citation type="journal article" date="2019" name="Structure">
        <title>A Conserved Basic Patch and Central Kink in the Nipah Virus Phosphoprotein Multimerization Domain Are Essential for Polymerase Function.</title>
        <authorList>
            <person name="Bruhn J.F."/>
            <person name="Hotard A.L."/>
            <person name="Spiropoulou C.F."/>
            <person name="Lo M.K."/>
            <person name="Saphire E.O."/>
        </authorList>
    </citation>
    <scope>X-RAY CRYSTALLOGRAPHY (1.90 ANGSTROMS) OF 470-578</scope>
    <scope>MUTAGENESIS OF LYS-545; LYS-549; ASP-554; ARG-555 AND LYS-559</scope>
</reference>
<reference evidence="15 16" key="11">
    <citation type="journal article" date="2022" name="J. Mol. Biol.">
        <title>Structural Dynamics of the C-terminal X Domain of Nipah and Hendra Viruses Controls the Attachment to the C-terminal Tail of the Nucleocapsid Protein.</title>
        <authorList>
            <person name="Bourhis J.M."/>
            <person name="Yabukarski F."/>
            <person name="Communie G."/>
            <person name="Schneider R."/>
            <person name="Volchkova V.A."/>
            <person name="Freneat M."/>
            <person name="Gerard F.C."/>
            <person name="Ducournau C."/>
            <person name="Mas C."/>
            <person name="Tarbouriech N."/>
            <person name="Ringkjoebing Jensen M."/>
            <person name="Volchkov V.E."/>
            <person name="Blackledge M."/>
            <person name="Jamin M."/>
        </authorList>
    </citation>
    <scope>X-RAY CRYSTALLOGRAPHY (2.10 ANGSTROMS) OF 655-709 IN COMPLEX WITH THE NUCLEOPROTEIN</scope>
    <scope>INTERACTION WITH THE NUCLEOPROTEIN</scope>
</reference>